<reference key="1">
    <citation type="journal article" date="2018" name="Comp. Biochem. Physiol.">
        <title>Peptidomic analysis of the host-defense peptides in skin secretions of the Trinidadian leaf frog Phyllomedusa trinitatis (Phyllomedusidae).</title>
        <authorList>
            <person name="Mechkarska M."/>
            <person name="Coquet L."/>
            <person name="Leprince J."/>
            <person name="Auguste R.J."/>
            <person name="Jouenne T."/>
            <person name="Mangoni M.L."/>
            <person name="Conlon J.M."/>
        </authorList>
    </citation>
    <scope>PROTEIN SEQUENCE</scope>
    <scope>FUNCTION</scope>
    <scope>SYNTHESIS</scope>
    <scope>SUBCELLULAR LOCATION</scope>
    <scope>MASS SPECTROMETRY</scope>
    <scope>AMIDATION AT LEU-19</scope>
    <source>
        <tissue>Skin secretion</tissue>
    </source>
</reference>
<reference key="2">
    <citation type="journal article" date="2019" name="J. Pept. Sci.">
        <title>Immunomodulatory, insulinotropic, and cytotoxic activities of phylloseptins and plasticin-TR from the Trinidanian leaf frog Phyllomedusa trinitatis.</title>
        <authorList>
            <person name="Pantic J."/>
            <person name="Guilhaudis L."/>
            <person name="Musale V."/>
            <person name="Attoub S."/>
            <person name="Lukic M.L."/>
            <person name="Mechkarska M."/>
            <person name="Conlon J.M."/>
        </authorList>
    </citation>
    <scope>FUNCTION</scope>
    <scope>SYNTHESIS</scope>
</reference>
<protein>
    <recommendedName>
        <fullName evidence="3">Phylloseptin-2.1TR</fullName>
        <shortName evidence="4">PLS-2.1TR</shortName>
    </recommendedName>
    <alternativeName>
        <fullName evidence="3">Phylloseptin-2.2TR</fullName>
    </alternativeName>
</protein>
<dbReference type="GO" id="GO:0005576">
    <property type="term" value="C:extracellular region"/>
    <property type="evidence" value="ECO:0007669"/>
    <property type="project" value="UniProtKB-SubCell"/>
</dbReference>
<dbReference type="GO" id="GO:0042742">
    <property type="term" value="P:defense response to bacterium"/>
    <property type="evidence" value="ECO:0007669"/>
    <property type="project" value="UniProtKB-KW"/>
</dbReference>
<dbReference type="GO" id="GO:0050832">
    <property type="term" value="P:defense response to fungus"/>
    <property type="evidence" value="ECO:0007669"/>
    <property type="project" value="UniProtKB-KW"/>
</dbReference>
<dbReference type="GO" id="GO:0045087">
    <property type="term" value="P:innate immune response"/>
    <property type="evidence" value="ECO:0007669"/>
    <property type="project" value="UniProtKB-KW"/>
</dbReference>
<dbReference type="GO" id="GO:0031640">
    <property type="term" value="P:killing of cells of another organism"/>
    <property type="evidence" value="ECO:0007669"/>
    <property type="project" value="UniProtKB-KW"/>
</dbReference>
<proteinExistence type="evidence at protein level"/>
<comment type="function">
    <molecule>Phylloseptin-2.1TR</molecule>
    <text evidence="1 2">Has antimicrobial activity against Gram-negative bacterium E.coli ATCC 25922 (MIC=50 uM), Gram-positive bacterium S.epidermidis ATCC 12228 (MIC=12.5 uM) and against fungus C.albicans ATCC 24433 (MIC=100 uM) (PubMed:29980138). Has an anti-inflammatory effect, since it inhibits the production of the pro-inflammatory cytokines TNF-alpha, and induces the production of the anti-inflammatory cytokine IL-10 (PubMed:30734396). Is cytotoxic to cancer line cells (PubMed:30734396). Shows moderate hemolysis on mouse erythrocytes (LC(50)=41 uM) (PubMed:30734396).</text>
</comment>
<comment type="subcellular location">
    <subcellularLocation>
        <location evidence="1">Secreted</location>
    </subcellularLocation>
</comment>
<comment type="tissue specificity">
    <text evidence="5">Expressed by the skin glands.</text>
</comment>
<comment type="PTM">
    <text evidence="4">Phylloseptin-2.1TR is amidated, whereas Phylloseptin-2.2TR is the name given to the non-amidated form.</text>
</comment>
<comment type="mass spectrometry" mass="1985.6" method="MALDI" evidence="1">
    <text>amidated Phylloseptin-2.1TR.</text>
</comment>
<comment type="mass spectrometry" mass="1986.4" method="MALDI" evidence="1">
    <text>non-amidated Phylloseptin-2.2TR.</text>
</comment>
<comment type="similarity">
    <text evidence="4">Belongs to the frog skin active peptide (FSAP) family. Phylloseptin subfamily.</text>
</comment>
<comment type="online information" name="The antimicrobial peptide database">
    <link uri="https://wangapd3.com/database/query_output.php?ID=02991"/>
</comment>
<feature type="peptide" id="PRO_0000445205" description="Phylloseptin-2.1TR" evidence="1">
    <location>
        <begin position="1"/>
        <end position="19"/>
    </location>
</feature>
<feature type="modified residue" description="Leucine amide; in form Phylloseptin-2.1TR" evidence="1">
    <location>
        <position position="19"/>
    </location>
</feature>
<accession>C0HLD7</accession>
<name>PLS21_PHYTB</name>
<organism>
    <name type="scientific">Phyllomedusa trinitatis</name>
    <name type="common">Trinidad leaf frog</name>
    <dbReference type="NCBI Taxonomy" id="332092"/>
    <lineage>
        <taxon>Eukaryota</taxon>
        <taxon>Metazoa</taxon>
        <taxon>Chordata</taxon>
        <taxon>Craniata</taxon>
        <taxon>Vertebrata</taxon>
        <taxon>Euteleostomi</taxon>
        <taxon>Amphibia</taxon>
        <taxon>Batrachia</taxon>
        <taxon>Anura</taxon>
        <taxon>Neobatrachia</taxon>
        <taxon>Hyloidea</taxon>
        <taxon>Hylidae</taxon>
        <taxon>Phyllomedusinae</taxon>
        <taxon>Phyllomedusa</taxon>
    </lineage>
</organism>
<sequence length="19" mass="1986">FLSLIPHIATGIAALAKHL</sequence>
<evidence type="ECO:0000269" key="1">
    <source>
    </source>
</evidence>
<evidence type="ECO:0000269" key="2">
    <source>
    </source>
</evidence>
<evidence type="ECO:0000303" key="3">
    <source>
    </source>
</evidence>
<evidence type="ECO:0000305" key="4"/>
<evidence type="ECO:0000305" key="5">
    <source>
    </source>
</evidence>
<keyword id="KW-0027">Amidation</keyword>
<keyword id="KW-0878">Amphibian defense peptide</keyword>
<keyword id="KW-0044">Antibiotic</keyword>
<keyword id="KW-0929">Antimicrobial</keyword>
<keyword id="KW-0204">Cytolysis</keyword>
<keyword id="KW-0903">Direct protein sequencing</keyword>
<keyword id="KW-0295">Fungicide</keyword>
<keyword id="KW-0354">Hemolysis</keyword>
<keyword id="KW-0391">Immunity</keyword>
<keyword id="KW-0399">Innate immunity</keyword>
<keyword id="KW-0964">Secreted</keyword>